<protein>
    <recommendedName>
        <fullName evidence="1">UPF0182 protein Cgl0786/cg0896</fullName>
    </recommendedName>
</protein>
<name>Y786_CORGL</name>
<keyword id="KW-1003">Cell membrane</keyword>
<keyword id="KW-0472">Membrane</keyword>
<keyword id="KW-1185">Reference proteome</keyword>
<keyword id="KW-0812">Transmembrane</keyword>
<keyword id="KW-1133">Transmembrane helix</keyword>
<gene>
    <name type="ordered locus">Cgl0786</name>
    <name type="ordered locus">cg0896</name>
</gene>
<evidence type="ECO:0000255" key="1">
    <source>
        <dbReference type="HAMAP-Rule" id="MF_01600"/>
    </source>
</evidence>
<evidence type="ECO:0000256" key="2">
    <source>
        <dbReference type="SAM" id="MobiDB-lite"/>
    </source>
</evidence>
<reference key="1">
    <citation type="journal article" date="2003" name="Appl. Microbiol. Biotechnol.">
        <title>The Corynebacterium glutamicum genome: features and impacts on biotechnological processes.</title>
        <authorList>
            <person name="Ikeda M."/>
            <person name="Nakagawa S."/>
        </authorList>
    </citation>
    <scope>NUCLEOTIDE SEQUENCE [LARGE SCALE GENOMIC DNA]</scope>
    <source>
        <strain>ATCC 13032 / DSM 20300 / JCM 1318 / BCRC 11384 / CCUG 27702 / LMG 3730 / NBRC 12168 / NCIMB 10025 / NRRL B-2784 / 534</strain>
    </source>
</reference>
<reference key="2">
    <citation type="journal article" date="2003" name="J. Biotechnol.">
        <title>The complete Corynebacterium glutamicum ATCC 13032 genome sequence and its impact on the production of L-aspartate-derived amino acids and vitamins.</title>
        <authorList>
            <person name="Kalinowski J."/>
            <person name="Bathe B."/>
            <person name="Bartels D."/>
            <person name="Bischoff N."/>
            <person name="Bott M."/>
            <person name="Burkovski A."/>
            <person name="Dusch N."/>
            <person name="Eggeling L."/>
            <person name="Eikmanns B.J."/>
            <person name="Gaigalat L."/>
            <person name="Goesmann A."/>
            <person name="Hartmann M."/>
            <person name="Huthmacher K."/>
            <person name="Kraemer R."/>
            <person name="Linke B."/>
            <person name="McHardy A.C."/>
            <person name="Meyer F."/>
            <person name="Moeckel B."/>
            <person name="Pfefferle W."/>
            <person name="Puehler A."/>
            <person name="Rey D.A."/>
            <person name="Rueckert C."/>
            <person name="Rupp O."/>
            <person name="Sahm H."/>
            <person name="Wendisch V.F."/>
            <person name="Wiegraebe I."/>
            <person name="Tauch A."/>
        </authorList>
    </citation>
    <scope>NUCLEOTIDE SEQUENCE [LARGE SCALE GENOMIC DNA]</scope>
    <source>
        <strain>ATCC 13032 / DSM 20300 / JCM 1318 / BCRC 11384 / CCUG 27702 / LMG 3730 / NBRC 12168 / NCIMB 10025 / NRRL B-2784 / 534</strain>
    </source>
</reference>
<organism>
    <name type="scientific">Corynebacterium glutamicum (strain ATCC 13032 / DSM 20300 / JCM 1318 / BCRC 11384 / CCUG 27702 / LMG 3730 / NBRC 12168 / NCIMB 10025 / NRRL B-2784 / 534)</name>
    <dbReference type="NCBI Taxonomy" id="196627"/>
    <lineage>
        <taxon>Bacteria</taxon>
        <taxon>Bacillati</taxon>
        <taxon>Actinomycetota</taxon>
        <taxon>Actinomycetes</taxon>
        <taxon>Mycobacteriales</taxon>
        <taxon>Corynebacteriaceae</taxon>
        <taxon>Corynebacterium</taxon>
    </lineage>
</organism>
<dbReference type="EMBL" id="BA000036">
    <property type="protein sequence ID" value="BAB98179.1"/>
    <property type="molecule type" value="Genomic_DNA"/>
</dbReference>
<dbReference type="EMBL" id="BX927150">
    <property type="protein sequence ID" value="CAF19491.1"/>
    <property type="molecule type" value="Genomic_DNA"/>
</dbReference>
<dbReference type="RefSeq" id="NP_600014.2">
    <property type="nucleotide sequence ID" value="NC_003450.3"/>
</dbReference>
<dbReference type="RefSeq" id="WP_011013886.1">
    <property type="nucleotide sequence ID" value="NC_006958.1"/>
</dbReference>
<dbReference type="SMR" id="Q8NS93"/>
<dbReference type="STRING" id="196627.cg0896"/>
<dbReference type="KEGG" id="cgb:cg0896"/>
<dbReference type="KEGG" id="cgl:Cgl0786"/>
<dbReference type="PATRIC" id="fig|196627.13.peg.771"/>
<dbReference type="eggNOG" id="COG1615">
    <property type="taxonomic scope" value="Bacteria"/>
</dbReference>
<dbReference type="HOGENOM" id="CLU_007733_1_0_11"/>
<dbReference type="OrthoDB" id="9763654at2"/>
<dbReference type="BioCyc" id="CORYNE:G18NG-10348-MONOMER"/>
<dbReference type="Proteomes" id="UP000000582">
    <property type="component" value="Chromosome"/>
</dbReference>
<dbReference type="Proteomes" id="UP000001009">
    <property type="component" value="Chromosome"/>
</dbReference>
<dbReference type="GO" id="GO:0005576">
    <property type="term" value="C:extracellular region"/>
    <property type="evidence" value="ECO:0007669"/>
    <property type="project" value="TreeGrafter"/>
</dbReference>
<dbReference type="GO" id="GO:0005886">
    <property type="term" value="C:plasma membrane"/>
    <property type="evidence" value="ECO:0007669"/>
    <property type="project" value="UniProtKB-SubCell"/>
</dbReference>
<dbReference type="HAMAP" id="MF_01600">
    <property type="entry name" value="UPF0182"/>
    <property type="match status" value="1"/>
</dbReference>
<dbReference type="InterPro" id="IPR005372">
    <property type="entry name" value="UPF0182"/>
</dbReference>
<dbReference type="NCBIfam" id="NF000825">
    <property type="entry name" value="PRK00068.1"/>
    <property type="match status" value="1"/>
</dbReference>
<dbReference type="PANTHER" id="PTHR39344">
    <property type="entry name" value="UPF0182 PROTEIN SLL1060"/>
    <property type="match status" value="1"/>
</dbReference>
<dbReference type="PANTHER" id="PTHR39344:SF1">
    <property type="entry name" value="UPF0182 PROTEIN SLL1060"/>
    <property type="match status" value="1"/>
</dbReference>
<dbReference type="Pfam" id="PF03699">
    <property type="entry name" value="UPF0182"/>
    <property type="match status" value="1"/>
</dbReference>
<proteinExistence type="inferred from homology"/>
<comment type="subcellular location">
    <subcellularLocation>
        <location evidence="1">Cell membrane</location>
        <topology evidence="1">Multi-pass membrane protein</topology>
    </subcellularLocation>
</comment>
<comment type="similarity">
    <text evidence="1">Belongs to the UPF0182 family.</text>
</comment>
<feature type="chain" id="PRO_0000157717" description="UPF0182 protein Cgl0786/cg0896">
    <location>
        <begin position="1"/>
        <end position="985"/>
    </location>
</feature>
<feature type="transmembrane region" description="Helical" evidence="1">
    <location>
        <begin position="19"/>
        <end position="39"/>
    </location>
</feature>
<feature type="transmembrane region" description="Helical" evidence="1">
    <location>
        <begin position="63"/>
        <end position="83"/>
    </location>
</feature>
<feature type="transmembrane region" description="Helical" evidence="1">
    <location>
        <begin position="115"/>
        <end position="135"/>
    </location>
</feature>
<feature type="transmembrane region" description="Helical" evidence="1">
    <location>
        <begin position="176"/>
        <end position="196"/>
    </location>
</feature>
<feature type="transmembrane region" description="Helical" evidence="1">
    <location>
        <begin position="215"/>
        <end position="235"/>
    </location>
</feature>
<feature type="transmembrane region" description="Helical" evidence="1">
    <location>
        <begin position="262"/>
        <end position="282"/>
    </location>
</feature>
<feature type="transmembrane region" description="Helical" evidence="1">
    <location>
        <begin position="290"/>
        <end position="310"/>
    </location>
</feature>
<feature type="region of interest" description="Disordered" evidence="2">
    <location>
        <begin position="904"/>
        <end position="944"/>
    </location>
</feature>
<feature type="compositionally biased region" description="Low complexity" evidence="2">
    <location>
        <begin position="929"/>
        <end position="939"/>
    </location>
</feature>
<sequence>MSTGLTPPPQPIKRPPKAVTWIFAIIALVILIAPMSVGFYTDWLWFGEVDFRGVFSKVIVTRIVLFVIFALIAGFVTWLAGYFVTKLRPDEMSAFDTQSPVYQYRQMIENSLRRVMVIIPIFVALLAGLIGQRSWRTVQMWLNGQDFGVSDQQFGLDYGFYAFDLPMLRLIADSLSMMLIVAFLIALVGHYLMGGIRAGNQMTGQKSFVSRGARTQLAVTAGLWMLVKVAGYWLDRYDLLTKENSTFTGASYTDINAQLPAKIILLVIALFVAIAFFSAIFLKDLRIPGLAVVLMLLSSVIIGAAWPLMLERFSVQPNRAEKEAEYISRNIESTRYAYGITDEDVTYEENWGAGETTNEEVAADSATISNIRLLDPQILSPTFTQQQQLRNFYGFPDQLAMDRFEVDGKLRDFVVAARELDPNALQQNQQDWINRHTVYTHGNGFIAAQANQVDEVARDVGSTRGGYPVYTVSDLQSNARAAESEDAEELGIKVDEPRVYYGPLIASATDGADYAIVGDTGDGPVEYDTDTSSYTYEGAGGVDIGNMVNRAMFALRYQEMNMLLSDRVGSESKILFERDPRSRVEKVAPWLTTDSKTYPTVIDGRIKWIVDGYTTLDSLPYSTRTSLTEATQDAVMPDGTPQPLITDRVGYIRNSVKAVVDAYDGTVELYEFDTEDPVLKAWRGVFPDTVKDGSEISDELRAHLRYPEDLFKVQRDMLAKYNVDDSGTFFTNDAFWSVPGDPTAAEGRQELKQPPYYVVAADPETGESSFQLITPFRGLQREYLSAHMSASSDPVTYGEITVRVLPTDSVTQGPKQAQDAMMSSDQVAQDQTLWRGSNDLHNGNLLTLPVGGGEILYVEPIYSQRKDQASAFPKLLRVLVFYKGQVGYAPTIAEALSQVGIDPKEAQDIEEVDGTATTPSTDETDTDTDQPATETPTAPVSEAEGIAAINDALSNLEAARDSSFEEYGRALDALDRAVDSYQSAQ</sequence>
<accession>Q8NS93</accession>